<reference key="1">
    <citation type="submission" date="2007-08" db="EMBL/GenBank/DDBJ databases">
        <title>Complete sequence of Thermotoga lettingae TMO.</title>
        <authorList>
            <consortium name="US DOE Joint Genome Institute"/>
            <person name="Copeland A."/>
            <person name="Lucas S."/>
            <person name="Lapidus A."/>
            <person name="Barry K."/>
            <person name="Glavina del Rio T."/>
            <person name="Dalin E."/>
            <person name="Tice H."/>
            <person name="Pitluck S."/>
            <person name="Foster B."/>
            <person name="Bruce D."/>
            <person name="Schmutz J."/>
            <person name="Larimer F."/>
            <person name="Land M."/>
            <person name="Hauser L."/>
            <person name="Kyrpides N."/>
            <person name="Mikhailova N."/>
            <person name="Nelson K."/>
            <person name="Gogarten J.P."/>
            <person name="Noll K."/>
            <person name="Richardson P."/>
        </authorList>
    </citation>
    <scope>NUCLEOTIDE SEQUENCE [LARGE SCALE GENOMIC DNA]</scope>
    <source>
        <strain>ATCC BAA-301 / DSM 14385 / NBRC 107922 / TMO</strain>
    </source>
</reference>
<organism>
    <name type="scientific">Pseudothermotoga lettingae (strain ATCC BAA-301 / DSM 14385 / NBRC 107922 / TMO)</name>
    <name type="common">Thermotoga lettingae</name>
    <dbReference type="NCBI Taxonomy" id="416591"/>
    <lineage>
        <taxon>Bacteria</taxon>
        <taxon>Thermotogati</taxon>
        <taxon>Thermotogota</taxon>
        <taxon>Thermotogae</taxon>
        <taxon>Thermotogales</taxon>
        <taxon>Thermotogaceae</taxon>
        <taxon>Pseudothermotoga</taxon>
    </lineage>
</organism>
<feature type="chain" id="PRO_1000058186" description="3-methyl-2-oxobutanoate hydroxymethyltransferase">
    <location>
        <begin position="1"/>
        <end position="265"/>
    </location>
</feature>
<feature type="active site" description="Proton acceptor" evidence="1">
    <location>
        <position position="179"/>
    </location>
</feature>
<feature type="binding site" evidence="1">
    <location>
        <begin position="41"/>
        <end position="42"/>
    </location>
    <ligand>
        <name>3-methyl-2-oxobutanoate</name>
        <dbReference type="ChEBI" id="CHEBI:11851"/>
    </ligand>
</feature>
<feature type="binding site" evidence="1">
    <location>
        <position position="41"/>
    </location>
    <ligand>
        <name>Mg(2+)</name>
        <dbReference type="ChEBI" id="CHEBI:18420"/>
    </ligand>
</feature>
<feature type="binding site" evidence="1">
    <location>
        <position position="80"/>
    </location>
    <ligand>
        <name>3-methyl-2-oxobutanoate</name>
        <dbReference type="ChEBI" id="CHEBI:11851"/>
    </ligand>
</feature>
<feature type="binding site" evidence="1">
    <location>
        <position position="80"/>
    </location>
    <ligand>
        <name>Mg(2+)</name>
        <dbReference type="ChEBI" id="CHEBI:18420"/>
    </ligand>
</feature>
<feature type="binding site" evidence="1">
    <location>
        <position position="110"/>
    </location>
    <ligand>
        <name>3-methyl-2-oxobutanoate</name>
        <dbReference type="ChEBI" id="CHEBI:11851"/>
    </ligand>
</feature>
<feature type="binding site" evidence="1">
    <location>
        <position position="112"/>
    </location>
    <ligand>
        <name>Mg(2+)</name>
        <dbReference type="ChEBI" id="CHEBI:18420"/>
    </ligand>
</feature>
<proteinExistence type="inferred from homology"/>
<accession>A8F498</accession>
<comment type="function">
    <text evidence="1">Catalyzes the reversible reaction in which hydroxymethyl group from 5,10-methylenetetrahydrofolate is transferred onto alpha-ketoisovalerate to form ketopantoate.</text>
</comment>
<comment type="catalytic activity">
    <reaction evidence="1">
        <text>3-methyl-2-oxobutanoate + (6R)-5,10-methylene-5,6,7,8-tetrahydrofolate + H2O = 2-dehydropantoate + (6S)-5,6,7,8-tetrahydrofolate</text>
        <dbReference type="Rhea" id="RHEA:11824"/>
        <dbReference type="ChEBI" id="CHEBI:11561"/>
        <dbReference type="ChEBI" id="CHEBI:11851"/>
        <dbReference type="ChEBI" id="CHEBI:15377"/>
        <dbReference type="ChEBI" id="CHEBI:15636"/>
        <dbReference type="ChEBI" id="CHEBI:57453"/>
        <dbReference type="EC" id="2.1.2.11"/>
    </reaction>
</comment>
<comment type="cofactor">
    <cofactor evidence="1">
        <name>Mg(2+)</name>
        <dbReference type="ChEBI" id="CHEBI:18420"/>
    </cofactor>
    <text evidence="1">Binds 1 Mg(2+) ion per subunit.</text>
</comment>
<comment type="pathway">
    <text evidence="1">Cofactor biosynthesis; (R)-pantothenate biosynthesis; (R)-pantoate from 3-methyl-2-oxobutanoate: step 1/2.</text>
</comment>
<comment type="subunit">
    <text evidence="1">Homodecamer; pentamer of dimers.</text>
</comment>
<comment type="subcellular location">
    <subcellularLocation>
        <location evidence="1">Cytoplasm</location>
    </subcellularLocation>
</comment>
<comment type="similarity">
    <text evidence="1">Belongs to the PanB family.</text>
</comment>
<name>PANB_PSELT</name>
<dbReference type="EC" id="2.1.2.11" evidence="1"/>
<dbReference type="EMBL" id="CP000812">
    <property type="protein sequence ID" value="ABV32982.1"/>
    <property type="molecule type" value="Genomic_DNA"/>
</dbReference>
<dbReference type="RefSeq" id="WP_012002463.1">
    <property type="nucleotide sequence ID" value="NZ_BSDV01000001.1"/>
</dbReference>
<dbReference type="SMR" id="A8F498"/>
<dbReference type="STRING" id="416591.Tlet_0415"/>
<dbReference type="KEGG" id="tle:Tlet_0415"/>
<dbReference type="eggNOG" id="COG0413">
    <property type="taxonomic scope" value="Bacteria"/>
</dbReference>
<dbReference type="HOGENOM" id="CLU_036645_1_0_0"/>
<dbReference type="OrthoDB" id="9781789at2"/>
<dbReference type="UniPathway" id="UPA00028">
    <property type="reaction ID" value="UER00003"/>
</dbReference>
<dbReference type="Proteomes" id="UP000002016">
    <property type="component" value="Chromosome"/>
</dbReference>
<dbReference type="GO" id="GO:0005737">
    <property type="term" value="C:cytoplasm"/>
    <property type="evidence" value="ECO:0007669"/>
    <property type="project" value="UniProtKB-SubCell"/>
</dbReference>
<dbReference type="GO" id="GO:0003864">
    <property type="term" value="F:3-methyl-2-oxobutanoate hydroxymethyltransferase activity"/>
    <property type="evidence" value="ECO:0007669"/>
    <property type="project" value="UniProtKB-UniRule"/>
</dbReference>
<dbReference type="GO" id="GO:0000287">
    <property type="term" value="F:magnesium ion binding"/>
    <property type="evidence" value="ECO:0007669"/>
    <property type="project" value="TreeGrafter"/>
</dbReference>
<dbReference type="GO" id="GO:0015940">
    <property type="term" value="P:pantothenate biosynthetic process"/>
    <property type="evidence" value="ECO:0007669"/>
    <property type="project" value="UniProtKB-UniRule"/>
</dbReference>
<dbReference type="CDD" id="cd06557">
    <property type="entry name" value="KPHMT-like"/>
    <property type="match status" value="1"/>
</dbReference>
<dbReference type="FunFam" id="3.20.20.60:FF:000003">
    <property type="entry name" value="3-methyl-2-oxobutanoate hydroxymethyltransferase"/>
    <property type="match status" value="1"/>
</dbReference>
<dbReference type="Gene3D" id="3.20.20.60">
    <property type="entry name" value="Phosphoenolpyruvate-binding domains"/>
    <property type="match status" value="1"/>
</dbReference>
<dbReference type="HAMAP" id="MF_00156">
    <property type="entry name" value="PanB"/>
    <property type="match status" value="1"/>
</dbReference>
<dbReference type="InterPro" id="IPR003700">
    <property type="entry name" value="Pantoate_hydroxy_MeTrfase"/>
</dbReference>
<dbReference type="InterPro" id="IPR015813">
    <property type="entry name" value="Pyrv/PenolPyrv_kinase-like_dom"/>
</dbReference>
<dbReference type="InterPro" id="IPR040442">
    <property type="entry name" value="Pyrv_kinase-like_dom_sf"/>
</dbReference>
<dbReference type="NCBIfam" id="TIGR00222">
    <property type="entry name" value="panB"/>
    <property type="match status" value="1"/>
</dbReference>
<dbReference type="NCBIfam" id="NF001452">
    <property type="entry name" value="PRK00311.1"/>
    <property type="match status" value="1"/>
</dbReference>
<dbReference type="PANTHER" id="PTHR20881">
    <property type="entry name" value="3-METHYL-2-OXOBUTANOATE HYDROXYMETHYLTRANSFERASE"/>
    <property type="match status" value="1"/>
</dbReference>
<dbReference type="PANTHER" id="PTHR20881:SF0">
    <property type="entry name" value="3-METHYL-2-OXOBUTANOATE HYDROXYMETHYLTRANSFERASE"/>
    <property type="match status" value="1"/>
</dbReference>
<dbReference type="Pfam" id="PF02548">
    <property type="entry name" value="Pantoate_transf"/>
    <property type="match status" value="1"/>
</dbReference>
<dbReference type="PIRSF" id="PIRSF000388">
    <property type="entry name" value="Pantoate_hydroxy_MeTrfase"/>
    <property type="match status" value="1"/>
</dbReference>
<dbReference type="SUPFAM" id="SSF51621">
    <property type="entry name" value="Phosphoenolpyruvate/pyruvate domain"/>
    <property type="match status" value="1"/>
</dbReference>
<protein>
    <recommendedName>
        <fullName evidence="1">3-methyl-2-oxobutanoate hydroxymethyltransferase</fullName>
        <ecNumber evidence="1">2.1.2.11</ecNumber>
    </recommendedName>
    <alternativeName>
        <fullName evidence="1">Ketopantoate hydroxymethyltransferase</fullName>
        <shortName evidence="1">KPHMT</shortName>
    </alternativeName>
</protein>
<keyword id="KW-0963">Cytoplasm</keyword>
<keyword id="KW-0460">Magnesium</keyword>
<keyword id="KW-0479">Metal-binding</keyword>
<keyword id="KW-0566">Pantothenate biosynthesis</keyword>
<keyword id="KW-1185">Reference proteome</keyword>
<keyword id="KW-0808">Transferase</keyword>
<sequence length="265" mass="28857">MNVNKFKSMKGKKPIVMLTAYDSVFASIVHQAGVDAILVGDSLANNVLGYSDTLPATMEDMIRHTQAVRRGAPEAFIIADMPFLSYQCSSDEAVRNAGRFLKEAGANAVKLEGGSFFSTTIERIVKSGIPVMGHLGLTPQSVNVFGGYKVQGKGDKSAKYLLEEAKALEEAGVFSIVLEMVVEETAKMITENLSIPTIGIGSGRFCDGQILVINDLLGMNPSFLPKFAKRYSNLFQISLEAVKNYVSDVQNHRFPFEENVFKAGE</sequence>
<gene>
    <name evidence="1" type="primary">panB</name>
    <name type="ordered locus">Tlet_0415</name>
</gene>
<evidence type="ECO:0000255" key="1">
    <source>
        <dbReference type="HAMAP-Rule" id="MF_00156"/>
    </source>
</evidence>